<feature type="chain" id="PRO_0000378169" description="Nonsense-mediated mRNA decay factor SMG8">
    <location>
        <begin position="1"/>
        <end position="873"/>
    </location>
</feature>
<feature type="region of interest" description="Disordered" evidence="2">
    <location>
        <begin position="531"/>
        <end position="604"/>
    </location>
</feature>
<feature type="compositionally biased region" description="Acidic residues" evidence="2">
    <location>
        <begin position="540"/>
        <end position="550"/>
    </location>
</feature>
<feature type="compositionally biased region" description="Low complexity" evidence="2">
    <location>
        <begin position="551"/>
        <end position="562"/>
    </location>
</feature>
<feature type="compositionally biased region" description="Low complexity" evidence="2">
    <location>
        <begin position="574"/>
        <end position="583"/>
    </location>
</feature>
<feature type="compositionally biased region" description="Basic and acidic residues" evidence="2">
    <location>
        <begin position="591"/>
        <end position="604"/>
    </location>
</feature>
<feature type="helix" evidence="5">
    <location>
        <begin position="3"/>
        <end position="13"/>
    </location>
</feature>
<feature type="helix" evidence="5">
    <location>
        <begin position="15"/>
        <end position="17"/>
    </location>
</feature>
<feature type="strand" evidence="5">
    <location>
        <begin position="23"/>
        <end position="28"/>
    </location>
</feature>
<feature type="helix" evidence="5">
    <location>
        <begin position="39"/>
        <end position="45"/>
    </location>
</feature>
<feature type="helix" evidence="5">
    <location>
        <begin position="56"/>
        <end position="58"/>
    </location>
</feature>
<feature type="strand" evidence="5">
    <location>
        <begin position="62"/>
        <end position="67"/>
    </location>
</feature>
<feature type="turn" evidence="5">
    <location>
        <begin position="68"/>
        <end position="71"/>
    </location>
</feature>
<feature type="strand" evidence="5">
    <location>
        <begin position="72"/>
        <end position="77"/>
    </location>
</feature>
<feature type="helix" evidence="5">
    <location>
        <begin position="83"/>
        <end position="91"/>
    </location>
</feature>
<feature type="helix" evidence="5">
    <location>
        <begin position="98"/>
        <end position="117"/>
    </location>
</feature>
<feature type="strand" evidence="5">
    <location>
        <begin position="121"/>
        <end position="131"/>
    </location>
</feature>
<feature type="helix" evidence="5">
    <location>
        <begin position="134"/>
        <end position="160"/>
    </location>
</feature>
<feature type="strand" evidence="5">
    <location>
        <begin position="168"/>
        <end position="170"/>
    </location>
</feature>
<feature type="helix" evidence="5">
    <location>
        <begin position="175"/>
        <end position="178"/>
    </location>
</feature>
<feature type="strand" evidence="5">
    <location>
        <begin position="186"/>
        <end position="191"/>
    </location>
</feature>
<feature type="helix" evidence="5">
    <location>
        <begin position="211"/>
        <end position="228"/>
    </location>
</feature>
<feature type="strand" evidence="5">
    <location>
        <begin position="232"/>
        <end position="234"/>
    </location>
</feature>
<feature type="helix" evidence="5">
    <location>
        <begin position="235"/>
        <end position="237"/>
    </location>
</feature>
<feature type="strand" evidence="5">
    <location>
        <begin position="244"/>
        <end position="246"/>
    </location>
</feature>
<feature type="strand" evidence="5">
    <location>
        <begin position="249"/>
        <end position="251"/>
    </location>
</feature>
<feature type="helix" evidence="5">
    <location>
        <begin position="290"/>
        <end position="299"/>
    </location>
</feature>
<feature type="helix" evidence="5">
    <location>
        <begin position="308"/>
        <end position="317"/>
    </location>
</feature>
<feature type="helix" evidence="5">
    <location>
        <begin position="319"/>
        <end position="323"/>
    </location>
</feature>
<feature type="turn" evidence="5">
    <location>
        <begin position="324"/>
        <end position="326"/>
    </location>
</feature>
<feature type="helix" evidence="5">
    <location>
        <begin position="334"/>
        <end position="354"/>
    </location>
</feature>
<feature type="helix" evidence="5">
    <location>
        <begin position="384"/>
        <end position="398"/>
    </location>
</feature>
<feature type="helix" evidence="5">
    <location>
        <begin position="403"/>
        <end position="417"/>
    </location>
</feature>
<reference key="1">
    <citation type="journal article" date="1998" name="Science">
        <title>Genome sequence of the nematode C. elegans: a platform for investigating biology.</title>
        <authorList>
            <consortium name="The C. elegans sequencing consortium"/>
        </authorList>
    </citation>
    <scope>NUCLEOTIDE SEQUENCE [LARGE SCALE GENOMIC DNA]</scope>
    <source>
        <strain>Bristol N2</strain>
    </source>
</reference>
<reference key="2">
    <citation type="journal article" date="2009" name="Genes Dev.">
        <title>SMG-8 and SMG-9, two novel subunits of the SMG-1 complex, regulate remodeling of the mRNA surveillance complex during nonsense-mediated mRNA decay.</title>
        <authorList>
            <person name="Yamashita A."/>
            <person name="Izumi N."/>
            <person name="Kashima I."/>
            <person name="Ohnishi T."/>
            <person name="Saari B."/>
            <person name="Katsuhata Y."/>
            <person name="Muramatsu R."/>
            <person name="Morita T."/>
            <person name="Iwamatsu A."/>
            <person name="Hachiya T."/>
            <person name="Kurata R."/>
            <person name="Hirano H."/>
            <person name="Anderson P."/>
            <person name="Ohno S."/>
        </authorList>
    </citation>
    <scope>FUNCTION</scope>
    <scope>DISRUPTION PHENOTYPE</scope>
</reference>
<protein>
    <recommendedName>
        <fullName evidence="1">Nonsense-mediated mRNA decay factor SMG8</fullName>
    </recommendedName>
    <alternativeName>
        <fullName>Suppressor with morphogenetic effect on genitalia protein 8</fullName>
    </alternativeName>
</protein>
<keyword id="KW-0002">3D-structure</keyword>
<keyword id="KW-0866">Nonsense-mediated mRNA decay</keyword>
<keyword id="KW-1185">Reference proteome</keyword>
<sequence length="873" mass="99970">MDIAKWVEHARTCYSTQLDTKIKVIGVIGKDYPDHGKGDNINCYLRENVFPVAATEDETCTIRGHFSEDDQILFLVMNGVDDVANIRKCLKSNPKSNYFDAMAESECQQIRMLHFLFISCHFIIIFEQTSRIDLELMRFLKKVNSARIQLRKKINQRLVASDLRDVSFNNRILSSAESEGRMVVPRLLIAFQRNNIRPDVNPGKKLQRELYEKLEKNLDNQFSDILKLYDLIDCGASSLCQLNETIPVVHLLNPKIVKRDIIGEMFEILMADAENTKISGNAGTLPSNNSFVKFLEDNFRSEKNEISLENVIELMNCLQCVLDGDLEEKHEKTAIQTFIKRIQNDHMEEARRLYTNAQRPGERRGADRFKDSEKPVKIRSKEEHLMRFNEATHYIDSVVGVNSREALSQLQAQCNEMWQSDMRACESVSMMGRSCVRKIHPTFGDQTAPEHRWTAHDASNTMISTCVCGRKQLIRPEPFSVKEANSDFYDHPDFKCCRRLWRYQFQLYQEDSEEKDDIMWADRESNSLRAAKKMAQREDELAEEDTDLDIPESLLDPDSTSPSDEDDVRVRTMSSSESSSQESDAYLRPTSRRDESMASKTERELTIDHVKRMQKLELAGKSEDFLITVPNSMTTGKLPIFPSWHLTSLGDSSIYSHGAGLKNQPNFKIGGDYLSPVVVLLDVNFDVWNRDLNKIRSEDFSRKCGKDNKDDSARVKLFVGFEYECSRGHRFFVDYNGEPLIYSKGSNVIRESAHRSSLGNVLQADLPIRRPCTCRKLPLQSAQLQKVHVVTPKAPVHITIDPKVLIPTHEGVYGTGQEPLELHHSKYYILHLPTVYSGPSGAWMPGEFNPEKQGVWMGGALKVAYKPVMSFKW</sequence>
<gene>
    <name type="primary">smg-8</name>
    <name type="ORF">K04B12.3</name>
</gene>
<comment type="function">
    <text evidence="3">Involved in nonsense-mediated decay (NMD) of mRNAs containing premature stop codons. Probable component of kinase complex containing smg-1 and recruited to stalled ribosomes.</text>
</comment>
<comment type="disruption phenotype">
    <text evidence="3">Defects in nonsense-mediated mRNA decay (NMD).</text>
</comment>
<comment type="similarity">
    <text evidence="4">Belongs to the SMG8 family.</text>
</comment>
<dbReference type="EMBL" id="Z83232">
    <property type="protein sequence ID" value="CAB05756.3"/>
    <property type="molecule type" value="Genomic_DNA"/>
</dbReference>
<dbReference type="RefSeq" id="NP_497003.3">
    <property type="nucleotide sequence ID" value="NM_064602.6"/>
</dbReference>
<dbReference type="PDB" id="5NKK">
    <property type="method" value="X-ray"/>
    <property type="resolution" value="2.64 A"/>
    <property type="chains" value="A/C/E=1-423"/>
</dbReference>
<dbReference type="PDB" id="5NKM">
    <property type="method" value="X-ray"/>
    <property type="resolution" value="2.49 A"/>
    <property type="chains" value="A/C=1-423, E=1-419"/>
</dbReference>
<dbReference type="PDBsum" id="5NKK"/>
<dbReference type="PDBsum" id="5NKM"/>
<dbReference type="SMR" id="O62301"/>
<dbReference type="BioGRID" id="40384">
    <property type="interactions" value="2"/>
</dbReference>
<dbReference type="FunCoup" id="O62301">
    <property type="interactions" value="1486"/>
</dbReference>
<dbReference type="STRING" id="6239.K04B12.3a.1"/>
<dbReference type="PaxDb" id="6239-K04B12.3a"/>
<dbReference type="PeptideAtlas" id="O62301"/>
<dbReference type="EnsemblMetazoa" id="K04B12.3a.1">
    <property type="protein sequence ID" value="K04B12.3a.1"/>
    <property type="gene ID" value="WBGene00010551"/>
</dbReference>
<dbReference type="GeneID" id="175103"/>
<dbReference type="KEGG" id="cel:CELE_K04B12.3"/>
<dbReference type="UCSC" id="K04B12.3">
    <property type="organism name" value="c. elegans"/>
</dbReference>
<dbReference type="AGR" id="WB:WBGene00010551"/>
<dbReference type="CTD" id="175103"/>
<dbReference type="WormBase" id="K04B12.3a">
    <property type="protein sequence ID" value="CE41824"/>
    <property type="gene ID" value="WBGene00010551"/>
    <property type="gene designation" value="smg-8"/>
</dbReference>
<dbReference type="eggNOG" id="KOG3692">
    <property type="taxonomic scope" value="Eukaryota"/>
</dbReference>
<dbReference type="HOGENOM" id="CLU_375675_0_0_1"/>
<dbReference type="InParanoid" id="O62301"/>
<dbReference type="OMA" id="MHSGCPK"/>
<dbReference type="OrthoDB" id="63589at2759"/>
<dbReference type="PhylomeDB" id="O62301"/>
<dbReference type="Reactome" id="R-CEL-975957">
    <property type="pathway name" value="Nonsense Mediated Decay (NMD) enhanced by the Exon Junction Complex (EJC)"/>
</dbReference>
<dbReference type="PRO" id="PR:O62301"/>
<dbReference type="Proteomes" id="UP000001940">
    <property type="component" value="Chromosome II"/>
</dbReference>
<dbReference type="Bgee" id="WBGene00010551">
    <property type="expression patterns" value="Expressed in germ line (C elegans) and 4 other cell types or tissues"/>
</dbReference>
<dbReference type="ExpressionAtlas" id="O62301">
    <property type="expression patterns" value="baseline and differential"/>
</dbReference>
<dbReference type="GO" id="GO:0005737">
    <property type="term" value="C:cytoplasm"/>
    <property type="evidence" value="ECO:0007005"/>
    <property type="project" value="WormBase"/>
</dbReference>
<dbReference type="GO" id="GO:0055120">
    <property type="term" value="C:striated muscle dense body"/>
    <property type="evidence" value="ECO:0007005"/>
    <property type="project" value="WormBase"/>
</dbReference>
<dbReference type="GO" id="GO:0000184">
    <property type="term" value="P:nuclear-transcribed mRNA catabolic process, nonsense-mediated decay"/>
    <property type="evidence" value="ECO:0000315"/>
    <property type="project" value="UniProtKB"/>
</dbReference>
<dbReference type="DisProt" id="DP03047"/>
<dbReference type="InterPro" id="IPR019354">
    <property type="entry name" value="SMG8-like"/>
</dbReference>
<dbReference type="PANTHER" id="PTHR13091">
    <property type="entry name" value="AMPLIFIED IN BREAST CANCER 2-RELATED"/>
    <property type="match status" value="1"/>
</dbReference>
<dbReference type="PANTHER" id="PTHR13091:SF0">
    <property type="entry name" value="NONSENSE-MEDIATED MRNA DECAY FACTOR SMG8"/>
    <property type="match status" value="1"/>
</dbReference>
<dbReference type="Pfam" id="PF10220">
    <property type="entry name" value="Smg8_Smg9"/>
    <property type="match status" value="1"/>
</dbReference>
<organism>
    <name type="scientific">Caenorhabditis elegans</name>
    <dbReference type="NCBI Taxonomy" id="6239"/>
    <lineage>
        <taxon>Eukaryota</taxon>
        <taxon>Metazoa</taxon>
        <taxon>Ecdysozoa</taxon>
        <taxon>Nematoda</taxon>
        <taxon>Chromadorea</taxon>
        <taxon>Rhabditida</taxon>
        <taxon>Rhabditina</taxon>
        <taxon>Rhabditomorpha</taxon>
        <taxon>Rhabditoidea</taxon>
        <taxon>Rhabditidae</taxon>
        <taxon>Peloderinae</taxon>
        <taxon>Caenorhabditis</taxon>
    </lineage>
</organism>
<evidence type="ECO:0000250" key="1">
    <source>
        <dbReference type="UniProtKB" id="Q8ND04"/>
    </source>
</evidence>
<evidence type="ECO:0000256" key="2">
    <source>
        <dbReference type="SAM" id="MobiDB-lite"/>
    </source>
</evidence>
<evidence type="ECO:0000269" key="3">
    <source>
    </source>
</evidence>
<evidence type="ECO:0000305" key="4"/>
<evidence type="ECO:0007829" key="5">
    <source>
        <dbReference type="PDB" id="5NKM"/>
    </source>
</evidence>
<accession>O62301</accession>
<name>SMG8_CAEEL</name>
<proteinExistence type="evidence at protein level"/>